<comment type="function">
    <text evidence="1 3">Inhibitor of voltage-gated potassium channels of the Kv4/KCND family (By similarity). Blocks calcium channels (Cav).</text>
</comment>
<comment type="subcellular location">
    <subcellularLocation>
        <location evidence="3">Secreted</location>
    </subcellularLocation>
</comment>
<comment type="tissue specificity">
    <text evidence="6">Expressed by the venom gland.</text>
</comment>
<comment type="domain">
    <text evidence="2">The presence of a 'disulfide through disulfide knot' structurally defines this protein as a knottin.</text>
</comment>
<comment type="mass spectrometry"/>
<comment type="similarity">
    <text evidence="5">Belongs to the neurotoxin 10 (Hwtx-1) family. 19 (HpTX2) subfamily.</text>
</comment>
<organism>
    <name type="scientific">Heteropoda venatoria</name>
    <name type="common">Brown huntsman spider</name>
    <name type="synonym">Aranea venatoria</name>
    <dbReference type="NCBI Taxonomy" id="152925"/>
    <lineage>
        <taxon>Eukaryota</taxon>
        <taxon>Metazoa</taxon>
        <taxon>Ecdysozoa</taxon>
        <taxon>Arthropoda</taxon>
        <taxon>Chelicerata</taxon>
        <taxon>Arachnida</taxon>
        <taxon>Araneae</taxon>
        <taxon>Araneomorphae</taxon>
        <taxon>Entelegynae</taxon>
        <taxon>Dionycha</taxon>
        <taxon>Sparassidae</taxon>
        <taxon>Heteropoda</taxon>
    </lineage>
</organism>
<protein>
    <recommendedName>
        <fullName evidence="5">Kappa-sparatoxin-Hv1e</fullName>
        <shortName evidence="5">Kappa-SPRTX-Hv1e</shortName>
    </recommendedName>
    <alternativeName>
        <fullName evidence="4">Toxin KJ1</fullName>
    </alternativeName>
</protein>
<name>TXJ1_HETVE</name>
<feature type="peptide" id="PRO_0000044553" description="Kappa-sparatoxin-Hv1e" evidence="3">
    <location>
        <begin position="1"/>
        <end position="29"/>
    </location>
</feature>
<feature type="disulfide bond" evidence="2">
    <location>
        <begin position="3"/>
        <end position="17"/>
    </location>
</feature>
<feature type="disulfide bond" evidence="2">
    <location>
        <begin position="10"/>
        <end position="22"/>
    </location>
</feature>
<feature type="disulfide bond" evidence="2">
    <location>
        <begin position="16"/>
        <end position="26"/>
    </location>
</feature>
<sequence>DDCGTLFSGCDTSKDCCEGYVCHLWCKYK</sequence>
<proteinExistence type="evidence at protein level"/>
<evidence type="ECO:0000250" key="1"/>
<evidence type="ECO:0000250" key="2">
    <source>
        <dbReference type="UniProtKB" id="P58426"/>
    </source>
</evidence>
<evidence type="ECO:0000269" key="3">
    <source ref="1"/>
</evidence>
<evidence type="ECO:0000303" key="4">
    <source ref="1"/>
</evidence>
<evidence type="ECO:0000305" key="5"/>
<evidence type="ECO:0000305" key="6">
    <source ref="1"/>
</evidence>
<keyword id="KW-0108">Calcium channel impairing toxin</keyword>
<keyword id="KW-0903">Direct protein sequencing</keyword>
<keyword id="KW-1015">Disulfide bond</keyword>
<keyword id="KW-0872">Ion channel impairing toxin</keyword>
<keyword id="KW-0960">Knottin</keyword>
<keyword id="KW-0528">Neurotoxin</keyword>
<keyword id="KW-0632">Potassium channel impairing toxin</keyword>
<keyword id="KW-0964">Secreted</keyword>
<keyword id="KW-0800">Toxin</keyword>
<keyword id="KW-1218">Voltage-gated calcium channel impairing toxin</keyword>
<keyword id="KW-1220">Voltage-gated potassium channel impairing toxin</keyword>
<reference key="1">
    <citation type="patent" date="1997-05-06" number="US5627154">
        <title>Calcium channel blocking polypeptides from Heteropoda venatoria.</title>
        <authorList>
            <person name="Kelbaugh P.R."/>
            <person name="Saccomano N.A."/>
            <person name="Volkmann R.A."/>
        </authorList>
    </citation>
    <scope>PROTEIN SEQUENCE</scope>
    <scope>FUNCTION</scope>
    <scope>SUBCELLULAR LOCATION</scope>
    <scope>MASS SPECTROMETRY</scope>
    <source>
        <tissue>Venom</tissue>
    </source>
</reference>
<accession>P61791</accession>
<dbReference type="SMR" id="P61791"/>
<dbReference type="ArachnoServer" id="AS000353">
    <property type="toxin name" value="kappa-sparatoxin-Hv1e"/>
</dbReference>
<dbReference type="GO" id="GO:0005576">
    <property type="term" value="C:extracellular region"/>
    <property type="evidence" value="ECO:0007669"/>
    <property type="project" value="UniProtKB-SubCell"/>
</dbReference>
<dbReference type="GO" id="GO:0005246">
    <property type="term" value="F:calcium channel regulator activity"/>
    <property type="evidence" value="ECO:0007669"/>
    <property type="project" value="UniProtKB-KW"/>
</dbReference>
<dbReference type="GO" id="GO:0008200">
    <property type="term" value="F:ion channel inhibitor activity"/>
    <property type="evidence" value="ECO:0007669"/>
    <property type="project" value="InterPro"/>
</dbReference>
<dbReference type="GO" id="GO:0015459">
    <property type="term" value="F:potassium channel regulator activity"/>
    <property type="evidence" value="ECO:0007669"/>
    <property type="project" value="UniProtKB-KW"/>
</dbReference>
<dbReference type="GO" id="GO:0090729">
    <property type="term" value="F:toxin activity"/>
    <property type="evidence" value="ECO:0007669"/>
    <property type="project" value="UniProtKB-KW"/>
</dbReference>
<dbReference type="InterPro" id="IPR011696">
    <property type="entry name" value="Huwentoxin-1"/>
</dbReference>
<dbReference type="Pfam" id="PF07740">
    <property type="entry name" value="Toxin_12"/>
    <property type="match status" value="1"/>
</dbReference>
<dbReference type="SUPFAM" id="SSF57059">
    <property type="entry name" value="omega toxin-like"/>
    <property type="match status" value="1"/>
</dbReference>